<proteinExistence type="inferred from homology"/>
<organism>
    <name type="scientific">Mannheimia succiniciproducens (strain KCTC 0769BP / MBEL55E)</name>
    <dbReference type="NCBI Taxonomy" id="221988"/>
    <lineage>
        <taxon>Bacteria</taxon>
        <taxon>Pseudomonadati</taxon>
        <taxon>Pseudomonadota</taxon>
        <taxon>Gammaproteobacteria</taxon>
        <taxon>Pasteurellales</taxon>
        <taxon>Pasteurellaceae</taxon>
        <taxon>Basfia</taxon>
    </lineage>
</organism>
<keyword id="KW-0004">4Fe-4S</keyword>
<keyword id="KW-0342">GTP-binding</keyword>
<keyword id="KW-0408">Iron</keyword>
<keyword id="KW-0411">Iron-sulfur</keyword>
<keyword id="KW-0456">Lyase</keyword>
<keyword id="KW-0479">Metal-binding</keyword>
<keyword id="KW-0501">Molybdenum cofactor biosynthesis</keyword>
<keyword id="KW-0547">Nucleotide-binding</keyword>
<keyword id="KW-0949">S-adenosyl-L-methionine</keyword>
<comment type="function">
    <text evidence="1">Catalyzes the cyclization of GTP to (8S)-3',8-cyclo-7,8-dihydroguanosine 5'-triphosphate.</text>
</comment>
<comment type="catalytic activity">
    <reaction evidence="1">
        <text>GTP + AH2 + S-adenosyl-L-methionine = (8S)-3',8-cyclo-7,8-dihydroguanosine 5'-triphosphate + 5'-deoxyadenosine + L-methionine + A + H(+)</text>
        <dbReference type="Rhea" id="RHEA:49576"/>
        <dbReference type="ChEBI" id="CHEBI:13193"/>
        <dbReference type="ChEBI" id="CHEBI:15378"/>
        <dbReference type="ChEBI" id="CHEBI:17319"/>
        <dbReference type="ChEBI" id="CHEBI:17499"/>
        <dbReference type="ChEBI" id="CHEBI:37565"/>
        <dbReference type="ChEBI" id="CHEBI:57844"/>
        <dbReference type="ChEBI" id="CHEBI:59789"/>
        <dbReference type="ChEBI" id="CHEBI:131766"/>
        <dbReference type="EC" id="4.1.99.22"/>
    </reaction>
</comment>
<comment type="cofactor">
    <cofactor evidence="1">
        <name>[4Fe-4S] cluster</name>
        <dbReference type="ChEBI" id="CHEBI:49883"/>
    </cofactor>
    <text evidence="1">Binds 2 [4Fe-4S] clusters. Binds 1 [4Fe-4S] cluster coordinated with 3 cysteines and an exchangeable S-adenosyl-L-methionine and 1 [4Fe-4S] cluster coordinated with 3 cysteines and the GTP-derived substrate.</text>
</comment>
<comment type="pathway">
    <text evidence="1">Cofactor biosynthesis; molybdopterin biosynthesis.</text>
</comment>
<comment type="subunit">
    <text evidence="1">Monomer and homodimer.</text>
</comment>
<comment type="similarity">
    <text evidence="1">Belongs to the radical SAM superfamily. MoaA family.</text>
</comment>
<name>MOAA_MANSM</name>
<evidence type="ECO:0000255" key="1">
    <source>
        <dbReference type="HAMAP-Rule" id="MF_01225"/>
    </source>
</evidence>
<evidence type="ECO:0000255" key="2">
    <source>
        <dbReference type="PROSITE-ProRule" id="PRU01266"/>
    </source>
</evidence>
<sequence length="337" mass="38492">MQSIPIKNVGTNRLVDTFQREYYYLRLSVTDVCNFKCTYCLPSGYQPPVQKESFLSLDEIRRIVGAFAAMGTEKVRLTGGEPTLRKDFLAIVETISALEGIKKVALTTNGYRMEKDVERWKKAGVSSINVSVDSLDPRQFYSITGENKFHQVMKGIERAFEIGYEKIKVNSVLMKNLNDQEFDRFKNWVKDKPIQMRFIELMQTGEMDQFFNRYHLSGQILAEKLLKEGWILRQKDRTDGPAKVFSHPDYLGEIGLIMPYEKNFCASCNRLRVSAKGKLHLCLFGEEGVDLRDLLVSDEQQVILQSRLYAALQGKREHHLLAQGNSGIRTNLASIGG</sequence>
<protein>
    <recommendedName>
        <fullName evidence="1">GTP 3',8-cyclase</fullName>
        <ecNumber evidence="1">4.1.99.22</ecNumber>
    </recommendedName>
    <alternativeName>
        <fullName evidence="1">Molybdenum cofactor biosynthesis protein A</fullName>
    </alternativeName>
</protein>
<gene>
    <name evidence="1" type="primary">moaA</name>
    <name type="ordered locus">MS1021</name>
</gene>
<reference key="1">
    <citation type="journal article" date="2004" name="Nat. Biotechnol.">
        <title>The genome sequence of the capnophilic rumen bacterium Mannheimia succiniciproducens.</title>
        <authorList>
            <person name="Hong S.H."/>
            <person name="Kim J.S."/>
            <person name="Lee S.Y."/>
            <person name="In Y.H."/>
            <person name="Choi S.S."/>
            <person name="Rih J.-K."/>
            <person name="Kim C.H."/>
            <person name="Jeong H."/>
            <person name="Hur C.G."/>
            <person name="Kim J.J."/>
        </authorList>
    </citation>
    <scope>NUCLEOTIDE SEQUENCE [LARGE SCALE GENOMIC DNA]</scope>
    <source>
        <strain>KCTC 0769BP / MBEL55E</strain>
    </source>
</reference>
<accession>Q65TT2</accession>
<dbReference type="EC" id="4.1.99.22" evidence="1"/>
<dbReference type="EMBL" id="AE016827">
    <property type="protein sequence ID" value="AAU37628.1"/>
    <property type="molecule type" value="Genomic_DNA"/>
</dbReference>
<dbReference type="RefSeq" id="WP_011200198.1">
    <property type="nucleotide sequence ID" value="NC_006300.1"/>
</dbReference>
<dbReference type="SMR" id="Q65TT2"/>
<dbReference type="STRING" id="221988.MS1021"/>
<dbReference type="KEGG" id="msu:MS1021"/>
<dbReference type="eggNOG" id="COG2896">
    <property type="taxonomic scope" value="Bacteria"/>
</dbReference>
<dbReference type="HOGENOM" id="CLU_009273_0_1_6"/>
<dbReference type="OrthoDB" id="9763993at2"/>
<dbReference type="UniPathway" id="UPA00344"/>
<dbReference type="Proteomes" id="UP000000607">
    <property type="component" value="Chromosome"/>
</dbReference>
<dbReference type="GO" id="GO:0051539">
    <property type="term" value="F:4 iron, 4 sulfur cluster binding"/>
    <property type="evidence" value="ECO:0007669"/>
    <property type="project" value="UniProtKB-UniRule"/>
</dbReference>
<dbReference type="GO" id="GO:0061799">
    <property type="term" value="F:cyclic pyranopterin monophosphate synthase activity"/>
    <property type="evidence" value="ECO:0007669"/>
    <property type="project" value="TreeGrafter"/>
</dbReference>
<dbReference type="GO" id="GO:0061798">
    <property type="term" value="F:GTP 3',8'-cyclase activity"/>
    <property type="evidence" value="ECO:0007669"/>
    <property type="project" value="UniProtKB-UniRule"/>
</dbReference>
<dbReference type="GO" id="GO:0005525">
    <property type="term" value="F:GTP binding"/>
    <property type="evidence" value="ECO:0007669"/>
    <property type="project" value="UniProtKB-UniRule"/>
</dbReference>
<dbReference type="GO" id="GO:0046872">
    <property type="term" value="F:metal ion binding"/>
    <property type="evidence" value="ECO:0007669"/>
    <property type="project" value="UniProtKB-KW"/>
</dbReference>
<dbReference type="GO" id="GO:1904047">
    <property type="term" value="F:S-adenosyl-L-methionine binding"/>
    <property type="evidence" value="ECO:0007669"/>
    <property type="project" value="UniProtKB-UniRule"/>
</dbReference>
<dbReference type="GO" id="GO:0006777">
    <property type="term" value="P:Mo-molybdopterin cofactor biosynthetic process"/>
    <property type="evidence" value="ECO:0007669"/>
    <property type="project" value="UniProtKB-UniRule"/>
</dbReference>
<dbReference type="CDD" id="cd01335">
    <property type="entry name" value="Radical_SAM"/>
    <property type="match status" value="1"/>
</dbReference>
<dbReference type="CDD" id="cd21117">
    <property type="entry name" value="Twitch_MoaA"/>
    <property type="match status" value="1"/>
</dbReference>
<dbReference type="FunFam" id="3.20.20.70:FF:000057">
    <property type="entry name" value="GTP 3',8-cyclase"/>
    <property type="match status" value="1"/>
</dbReference>
<dbReference type="Gene3D" id="3.20.20.70">
    <property type="entry name" value="Aldolase class I"/>
    <property type="match status" value="1"/>
</dbReference>
<dbReference type="HAMAP" id="MF_01225_B">
    <property type="entry name" value="MoaA_B"/>
    <property type="match status" value="1"/>
</dbReference>
<dbReference type="InterPro" id="IPR013785">
    <property type="entry name" value="Aldolase_TIM"/>
</dbReference>
<dbReference type="InterPro" id="IPR006638">
    <property type="entry name" value="Elp3/MiaA/NifB-like_rSAM"/>
</dbReference>
<dbReference type="InterPro" id="IPR013483">
    <property type="entry name" value="MoaA"/>
</dbReference>
<dbReference type="InterPro" id="IPR010505">
    <property type="entry name" value="MoaA_twitch"/>
</dbReference>
<dbReference type="InterPro" id="IPR050105">
    <property type="entry name" value="MoCo_biosynth_MoaA/MoaC"/>
</dbReference>
<dbReference type="InterPro" id="IPR007197">
    <property type="entry name" value="rSAM"/>
</dbReference>
<dbReference type="NCBIfam" id="TIGR02666">
    <property type="entry name" value="moaA"/>
    <property type="match status" value="1"/>
</dbReference>
<dbReference type="PANTHER" id="PTHR22960:SF28">
    <property type="entry name" value="GTP 3',8-CYCLASE"/>
    <property type="match status" value="1"/>
</dbReference>
<dbReference type="PANTHER" id="PTHR22960">
    <property type="entry name" value="MOLYBDOPTERIN COFACTOR SYNTHESIS PROTEIN A"/>
    <property type="match status" value="1"/>
</dbReference>
<dbReference type="Pfam" id="PF13353">
    <property type="entry name" value="Fer4_12"/>
    <property type="match status" value="1"/>
</dbReference>
<dbReference type="Pfam" id="PF06463">
    <property type="entry name" value="Mob_synth_C"/>
    <property type="match status" value="1"/>
</dbReference>
<dbReference type="Pfam" id="PF04055">
    <property type="entry name" value="Radical_SAM"/>
    <property type="match status" value="1"/>
</dbReference>
<dbReference type="SFLD" id="SFLDG01383">
    <property type="entry name" value="cyclic_pyranopterin_phosphate"/>
    <property type="match status" value="1"/>
</dbReference>
<dbReference type="SFLD" id="SFLDG01386">
    <property type="entry name" value="main_SPASM_domain-containing"/>
    <property type="match status" value="1"/>
</dbReference>
<dbReference type="SMART" id="SM00729">
    <property type="entry name" value="Elp3"/>
    <property type="match status" value="1"/>
</dbReference>
<dbReference type="SUPFAM" id="SSF102114">
    <property type="entry name" value="Radical SAM enzymes"/>
    <property type="match status" value="1"/>
</dbReference>
<dbReference type="PROSITE" id="PS51918">
    <property type="entry name" value="RADICAL_SAM"/>
    <property type="match status" value="1"/>
</dbReference>
<feature type="chain" id="PRO_1000054198" description="GTP 3',8-cyclase">
    <location>
        <begin position="1"/>
        <end position="337"/>
    </location>
</feature>
<feature type="domain" description="Radical SAM core" evidence="2">
    <location>
        <begin position="17"/>
        <end position="242"/>
    </location>
</feature>
<feature type="binding site" evidence="1">
    <location>
        <position position="26"/>
    </location>
    <ligand>
        <name>GTP</name>
        <dbReference type="ChEBI" id="CHEBI:37565"/>
    </ligand>
</feature>
<feature type="binding site" evidence="1">
    <location>
        <position position="33"/>
    </location>
    <ligand>
        <name>[4Fe-4S] cluster</name>
        <dbReference type="ChEBI" id="CHEBI:49883"/>
        <label>1</label>
        <note>4Fe-4S-S-AdoMet</note>
    </ligand>
</feature>
<feature type="binding site" evidence="1">
    <location>
        <position position="37"/>
    </location>
    <ligand>
        <name>[4Fe-4S] cluster</name>
        <dbReference type="ChEBI" id="CHEBI:49883"/>
        <label>1</label>
        <note>4Fe-4S-S-AdoMet</note>
    </ligand>
</feature>
<feature type="binding site" evidence="1">
    <location>
        <position position="39"/>
    </location>
    <ligand>
        <name>S-adenosyl-L-methionine</name>
        <dbReference type="ChEBI" id="CHEBI:59789"/>
    </ligand>
</feature>
<feature type="binding site" evidence="1">
    <location>
        <position position="40"/>
    </location>
    <ligand>
        <name>[4Fe-4S] cluster</name>
        <dbReference type="ChEBI" id="CHEBI:49883"/>
        <label>1</label>
        <note>4Fe-4S-S-AdoMet</note>
    </ligand>
</feature>
<feature type="binding site" evidence="1">
    <location>
        <position position="76"/>
    </location>
    <ligand>
        <name>GTP</name>
        <dbReference type="ChEBI" id="CHEBI:37565"/>
    </ligand>
</feature>
<feature type="binding site" evidence="1">
    <location>
        <position position="80"/>
    </location>
    <ligand>
        <name>S-adenosyl-L-methionine</name>
        <dbReference type="ChEBI" id="CHEBI:59789"/>
    </ligand>
</feature>
<feature type="binding site" evidence="1">
    <location>
        <position position="107"/>
    </location>
    <ligand>
        <name>GTP</name>
        <dbReference type="ChEBI" id="CHEBI:37565"/>
    </ligand>
</feature>
<feature type="binding site" evidence="1">
    <location>
        <position position="131"/>
    </location>
    <ligand>
        <name>S-adenosyl-L-methionine</name>
        <dbReference type="ChEBI" id="CHEBI:59789"/>
    </ligand>
</feature>
<feature type="binding site" evidence="1">
    <location>
        <position position="168"/>
    </location>
    <ligand>
        <name>GTP</name>
        <dbReference type="ChEBI" id="CHEBI:37565"/>
    </ligand>
</feature>
<feature type="binding site" evidence="1">
    <location>
        <position position="202"/>
    </location>
    <ligand>
        <name>S-adenosyl-L-methionine</name>
        <dbReference type="ChEBI" id="CHEBI:59789"/>
    </ligand>
</feature>
<feature type="binding site" evidence="1">
    <location>
        <position position="265"/>
    </location>
    <ligand>
        <name>[4Fe-4S] cluster</name>
        <dbReference type="ChEBI" id="CHEBI:49883"/>
        <label>2</label>
        <note>4Fe-4S-substrate</note>
    </ligand>
</feature>
<feature type="binding site" evidence="1">
    <location>
        <position position="268"/>
    </location>
    <ligand>
        <name>[4Fe-4S] cluster</name>
        <dbReference type="ChEBI" id="CHEBI:49883"/>
        <label>2</label>
        <note>4Fe-4S-substrate</note>
    </ligand>
</feature>
<feature type="binding site" evidence="1">
    <location>
        <begin position="270"/>
        <end position="272"/>
    </location>
    <ligand>
        <name>GTP</name>
        <dbReference type="ChEBI" id="CHEBI:37565"/>
    </ligand>
</feature>
<feature type="binding site" evidence="1">
    <location>
        <position position="282"/>
    </location>
    <ligand>
        <name>[4Fe-4S] cluster</name>
        <dbReference type="ChEBI" id="CHEBI:49883"/>
        <label>2</label>
        <note>4Fe-4S-substrate</note>
    </ligand>
</feature>